<organism>
    <name type="scientific">Pectobacterium atrosepticum (strain SCRI 1043 / ATCC BAA-672)</name>
    <name type="common">Erwinia carotovora subsp. atroseptica</name>
    <dbReference type="NCBI Taxonomy" id="218491"/>
    <lineage>
        <taxon>Bacteria</taxon>
        <taxon>Pseudomonadati</taxon>
        <taxon>Pseudomonadota</taxon>
        <taxon>Gammaproteobacteria</taxon>
        <taxon>Enterobacterales</taxon>
        <taxon>Pectobacteriaceae</taxon>
        <taxon>Pectobacterium</taxon>
    </lineage>
</organism>
<keyword id="KW-0131">Cell cycle</keyword>
<keyword id="KW-0132">Cell division</keyword>
<keyword id="KW-0997">Cell inner membrane</keyword>
<keyword id="KW-1003">Cell membrane</keyword>
<keyword id="KW-0472">Membrane</keyword>
<keyword id="KW-1185">Reference proteome</keyword>
<keyword id="KW-0812">Transmembrane</keyword>
<keyword id="KW-1133">Transmembrane helix</keyword>
<gene>
    <name evidence="1" type="primary">zipA</name>
    <name type="ordered locus">ECA0896</name>
</gene>
<name>ZIPA_PECAS</name>
<sequence>MMQDLRLILIVVGAIAIIALLLHGLWTSRKERSSLFRDRPVKRAKKARDETPLDDLDEGVGEVRVKGARPQQSEPSFDSASVDSSSFDNYGSAREDVRSEAKSPFEHMSPVSAYDPLLDEATPVDSPRSQVRGDANPQVVDPRQAFIPESDIDAPREPFAYDAPSSAQQQPVSHSLHEKVQPAPQQPAEPAAAKETVLVLHVVAHQGGVIGGELLLQSLLQAGFQFGEMNIFHRHVNPAGAGPVLFSLANMVKPGSFNVDTMSEFSTPGVSIFMMVPSYGDAGQNFKLMLQSAQRIADDVGGVVQDDERRMMTPQKVESYKARIRDVLKANA</sequence>
<dbReference type="EMBL" id="BX950851">
    <property type="protein sequence ID" value="CAG73808.1"/>
    <property type="molecule type" value="Genomic_DNA"/>
</dbReference>
<dbReference type="RefSeq" id="WP_011092498.1">
    <property type="nucleotide sequence ID" value="NC_004547.2"/>
</dbReference>
<dbReference type="SMR" id="Q6D8S6"/>
<dbReference type="STRING" id="218491.ECA0896"/>
<dbReference type="KEGG" id="eca:ECA0896"/>
<dbReference type="eggNOG" id="COG3115">
    <property type="taxonomic scope" value="Bacteria"/>
</dbReference>
<dbReference type="HOGENOM" id="CLU_030174_1_0_6"/>
<dbReference type="Proteomes" id="UP000007966">
    <property type="component" value="Chromosome"/>
</dbReference>
<dbReference type="GO" id="GO:0032153">
    <property type="term" value="C:cell division site"/>
    <property type="evidence" value="ECO:0007669"/>
    <property type="project" value="UniProtKB-UniRule"/>
</dbReference>
<dbReference type="GO" id="GO:0005886">
    <property type="term" value="C:plasma membrane"/>
    <property type="evidence" value="ECO:0007669"/>
    <property type="project" value="UniProtKB-SubCell"/>
</dbReference>
<dbReference type="GO" id="GO:0000917">
    <property type="term" value="P:division septum assembly"/>
    <property type="evidence" value="ECO:0007669"/>
    <property type="project" value="TreeGrafter"/>
</dbReference>
<dbReference type="GO" id="GO:0043093">
    <property type="term" value="P:FtsZ-dependent cytokinesis"/>
    <property type="evidence" value="ECO:0007669"/>
    <property type="project" value="UniProtKB-UniRule"/>
</dbReference>
<dbReference type="CDD" id="cd00231">
    <property type="entry name" value="ZipA"/>
    <property type="match status" value="1"/>
</dbReference>
<dbReference type="FunFam" id="3.30.1400.10:FF:000001">
    <property type="entry name" value="Cell division protein ZipA"/>
    <property type="match status" value="1"/>
</dbReference>
<dbReference type="Gene3D" id="3.30.1400.10">
    <property type="entry name" value="ZipA, C-terminal FtsZ-binding domain"/>
    <property type="match status" value="1"/>
</dbReference>
<dbReference type="HAMAP" id="MF_00509">
    <property type="entry name" value="ZipA"/>
    <property type="match status" value="1"/>
</dbReference>
<dbReference type="InterPro" id="IPR011919">
    <property type="entry name" value="Cell_div_ZipA"/>
</dbReference>
<dbReference type="InterPro" id="IPR007449">
    <property type="entry name" value="ZipA_FtsZ-bd_C"/>
</dbReference>
<dbReference type="InterPro" id="IPR036765">
    <property type="entry name" value="ZipA_FtsZ-bd_C_sf"/>
</dbReference>
<dbReference type="NCBIfam" id="TIGR02205">
    <property type="entry name" value="septum_zipA"/>
    <property type="match status" value="1"/>
</dbReference>
<dbReference type="PANTHER" id="PTHR38685">
    <property type="entry name" value="CELL DIVISION PROTEIN ZIPA"/>
    <property type="match status" value="1"/>
</dbReference>
<dbReference type="PANTHER" id="PTHR38685:SF1">
    <property type="entry name" value="CELL DIVISION PROTEIN ZIPA"/>
    <property type="match status" value="1"/>
</dbReference>
<dbReference type="Pfam" id="PF04354">
    <property type="entry name" value="ZipA_C"/>
    <property type="match status" value="1"/>
</dbReference>
<dbReference type="SMART" id="SM00771">
    <property type="entry name" value="ZipA_C"/>
    <property type="match status" value="1"/>
</dbReference>
<dbReference type="SUPFAM" id="SSF64383">
    <property type="entry name" value="Cell-division protein ZipA, C-terminal domain"/>
    <property type="match status" value="1"/>
</dbReference>
<proteinExistence type="inferred from homology"/>
<protein>
    <recommendedName>
        <fullName evidence="1">Cell division protein ZipA</fullName>
    </recommendedName>
</protein>
<feature type="chain" id="PRO_0000214524" description="Cell division protein ZipA">
    <location>
        <begin position="1"/>
        <end position="332"/>
    </location>
</feature>
<feature type="topological domain" description="Periplasmic" evidence="1">
    <location>
        <begin position="1"/>
        <end position="6"/>
    </location>
</feature>
<feature type="transmembrane region" description="Helical" evidence="1">
    <location>
        <begin position="7"/>
        <end position="27"/>
    </location>
</feature>
<feature type="topological domain" description="Cytoplasmic" evidence="1">
    <location>
        <begin position="28"/>
        <end position="332"/>
    </location>
</feature>
<feature type="region of interest" description="Disordered" evidence="2">
    <location>
        <begin position="40"/>
        <end position="189"/>
    </location>
</feature>
<feature type="compositionally biased region" description="Basic and acidic residues" evidence="2">
    <location>
        <begin position="40"/>
        <end position="51"/>
    </location>
</feature>
<feature type="compositionally biased region" description="Low complexity" evidence="2">
    <location>
        <begin position="76"/>
        <end position="88"/>
    </location>
</feature>
<feature type="compositionally biased region" description="Basic and acidic residues" evidence="2">
    <location>
        <begin position="93"/>
        <end position="105"/>
    </location>
</feature>
<evidence type="ECO:0000255" key="1">
    <source>
        <dbReference type="HAMAP-Rule" id="MF_00509"/>
    </source>
</evidence>
<evidence type="ECO:0000256" key="2">
    <source>
        <dbReference type="SAM" id="MobiDB-lite"/>
    </source>
</evidence>
<comment type="function">
    <text evidence="1">Essential cell division protein that stabilizes the FtsZ protofilaments by cross-linking them and that serves as a cytoplasmic membrane anchor for the Z ring. Also required for the recruitment to the septal ring of downstream cell division proteins.</text>
</comment>
<comment type="subunit">
    <text evidence="1">Interacts with FtsZ via their C-terminal domains.</text>
</comment>
<comment type="subcellular location">
    <subcellularLocation>
        <location evidence="1">Cell inner membrane</location>
        <topology evidence="1">Single-pass type I membrane protein</topology>
    </subcellularLocation>
    <text evidence="1">Localizes to the Z ring in an FtsZ-dependent manner.</text>
</comment>
<comment type="similarity">
    <text evidence="1">Belongs to the ZipA family.</text>
</comment>
<reference key="1">
    <citation type="journal article" date="2004" name="Proc. Natl. Acad. Sci. U.S.A.">
        <title>Genome sequence of the enterobacterial phytopathogen Erwinia carotovora subsp. atroseptica and characterization of virulence factors.</title>
        <authorList>
            <person name="Bell K.S."/>
            <person name="Sebaihia M."/>
            <person name="Pritchard L."/>
            <person name="Holden M.T.G."/>
            <person name="Hyman L.J."/>
            <person name="Holeva M.C."/>
            <person name="Thomson N.R."/>
            <person name="Bentley S.D."/>
            <person name="Churcher L.J.C."/>
            <person name="Mungall K."/>
            <person name="Atkin R."/>
            <person name="Bason N."/>
            <person name="Brooks K."/>
            <person name="Chillingworth T."/>
            <person name="Clark K."/>
            <person name="Doggett J."/>
            <person name="Fraser A."/>
            <person name="Hance Z."/>
            <person name="Hauser H."/>
            <person name="Jagels K."/>
            <person name="Moule S."/>
            <person name="Norbertczak H."/>
            <person name="Ormond D."/>
            <person name="Price C."/>
            <person name="Quail M.A."/>
            <person name="Sanders M."/>
            <person name="Walker D."/>
            <person name="Whitehead S."/>
            <person name="Salmond G.P.C."/>
            <person name="Birch P.R.J."/>
            <person name="Parkhill J."/>
            <person name="Toth I.K."/>
        </authorList>
    </citation>
    <scope>NUCLEOTIDE SEQUENCE [LARGE SCALE GENOMIC DNA]</scope>
    <source>
        <strain>SCRI 1043 / ATCC BAA-672</strain>
    </source>
</reference>
<accession>Q6D8S6</accession>